<proteinExistence type="inferred from homology"/>
<name>UVRD1_MYCTO</name>
<dbReference type="EC" id="5.6.2.4"/>
<dbReference type="EMBL" id="AE000516">
    <property type="protein sequence ID" value="AAK45224.1"/>
    <property type="molecule type" value="Genomic_DNA"/>
</dbReference>
<dbReference type="PIR" id="C70716">
    <property type="entry name" value="C70716"/>
</dbReference>
<dbReference type="RefSeq" id="WP_003404859.1">
    <property type="nucleotide sequence ID" value="NZ_KK341227.1"/>
</dbReference>
<dbReference type="SMR" id="P9WMQ0"/>
<dbReference type="KEGG" id="mtc:MT0976"/>
<dbReference type="PATRIC" id="fig|83331.31.peg.1047"/>
<dbReference type="HOGENOM" id="CLU_004585_5_2_11"/>
<dbReference type="Proteomes" id="UP000001020">
    <property type="component" value="Chromosome"/>
</dbReference>
<dbReference type="GO" id="GO:0005829">
    <property type="term" value="C:cytosol"/>
    <property type="evidence" value="ECO:0007669"/>
    <property type="project" value="TreeGrafter"/>
</dbReference>
<dbReference type="GO" id="GO:0033202">
    <property type="term" value="C:DNA helicase complex"/>
    <property type="evidence" value="ECO:0007669"/>
    <property type="project" value="TreeGrafter"/>
</dbReference>
<dbReference type="GO" id="GO:0043138">
    <property type="term" value="F:3'-5' DNA helicase activity"/>
    <property type="evidence" value="ECO:0007669"/>
    <property type="project" value="TreeGrafter"/>
</dbReference>
<dbReference type="GO" id="GO:0005524">
    <property type="term" value="F:ATP binding"/>
    <property type="evidence" value="ECO:0007669"/>
    <property type="project" value="UniProtKB-KW"/>
</dbReference>
<dbReference type="GO" id="GO:0016887">
    <property type="term" value="F:ATP hydrolysis activity"/>
    <property type="evidence" value="ECO:0007669"/>
    <property type="project" value="RHEA"/>
</dbReference>
<dbReference type="GO" id="GO:0003677">
    <property type="term" value="F:DNA binding"/>
    <property type="evidence" value="ECO:0007669"/>
    <property type="project" value="UniProtKB-KW"/>
</dbReference>
<dbReference type="GO" id="GO:0006260">
    <property type="term" value="P:DNA replication"/>
    <property type="evidence" value="ECO:0007669"/>
    <property type="project" value="InterPro"/>
</dbReference>
<dbReference type="GO" id="GO:0000725">
    <property type="term" value="P:recombinational repair"/>
    <property type="evidence" value="ECO:0007669"/>
    <property type="project" value="TreeGrafter"/>
</dbReference>
<dbReference type="CDD" id="cd17932">
    <property type="entry name" value="DEXQc_UvrD"/>
    <property type="match status" value="1"/>
</dbReference>
<dbReference type="CDD" id="cd18807">
    <property type="entry name" value="SF1_C_UvrD"/>
    <property type="match status" value="1"/>
</dbReference>
<dbReference type="FunFam" id="1.10.10.160:FF:000001">
    <property type="entry name" value="ATP-dependent DNA helicase"/>
    <property type="match status" value="1"/>
</dbReference>
<dbReference type="FunFam" id="1.10.486.10:FF:000003">
    <property type="entry name" value="ATP-dependent DNA helicase"/>
    <property type="match status" value="1"/>
</dbReference>
<dbReference type="Gene3D" id="1.10.10.160">
    <property type="match status" value="1"/>
</dbReference>
<dbReference type="Gene3D" id="3.40.50.300">
    <property type="entry name" value="P-loop containing nucleotide triphosphate hydrolases"/>
    <property type="match status" value="2"/>
</dbReference>
<dbReference type="Gene3D" id="1.10.486.10">
    <property type="entry name" value="PCRA, domain 4"/>
    <property type="match status" value="1"/>
</dbReference>
<dbReference type="InterPro" id="IPR005751">
    <property type="entry name" value="ATP-dep_DNA_helicase_PcrA"/>
</dbReference>
<dbReference type="InterPro" id="IPR013986">
    <property type="entry name" value="DExx_box_DNA_helicase_dom_sf"/>
</dbReference>
<dbReference type="InterPro" id="IPR014017">
    <property type="entry name" value="DNA_helicase_UvrD-like_C"/>
</dbReference>
<dbReference type="InterPro" id="IPR000212">
    <property type="entry name" value="DNA_helicase_UvrD/REP"/>
</dbReference>
<dbReference type="InterPro" id="IPR027417">
    <property type="entry name" value="P-loop_NTPase"/>
</dbReference>
<dbReference type="InterPro" id="IPR014016">
    <property type="entry name" value="UvrD-like_ATP-bd"/>
</dbReference>
<dbReference type="NCBIfam" id="TIGR01073">
    <property type="entry name" value="pcrA"/>
    <property type="match status" value="1"/>
</dbReference>
<dbReference type="PANTHER" id="PTHR11070:SF2">
    <property type="entry name" value="ATP-DEPENDENT DNA HELICASE SRS2"/>
    <property type="match status" value="1"/>
</dbReference>
<dbReference type="PANTHER" id="PTHR11070">
    <property type="entry name" value="UVRD / RECB / PCRA DNA HELICASE FAMILY MEMBER"/>
    <property type="match status" value="1"/>
</dbReference>
<dbReference type="Pfam" id="PF21196">
    <property type="entry name" value="PcrA_UvrD_tudor"/>
    <property type="match status" value="1"/>
</dbReference>
<dbReference type="Pfam" id="PF00580">
    <property type="entry name" value="UvrD-helicase"/>
    <property type="match status" value="1"/>
</dbReference>
<dbReference type="Pfam" id="PF13361">
    <property type="entry name" value="UvrD_C"/>
    <property type="match status" value="1"/>
</dbReference>
<dbReference type="SUPFAM" id="SSF52540">
    <property type="entry name" value="P-loop containing nucleoside triphosphate hydrolases"/>
    <property type="match status" value="1"/>
</dbReference>
<dbReference type="PROSITE" id="PS51198">
    <property type="entry name" value="UVRD_HELICASE_ATP_BIND"/>
    <property type="match status" value="1"/>
</dbReference>
<dbReference type="PROSITE" id="PS51217">
    <property type="entry name" value="UVRD_HELICASE_CTER"/>
    <property type="match status" value="1"/>
</dbReference>
<sequence length="771" mass="85050">MSVHATDAKPPGPSPADQLLDGLNPQQRQAVVHEGSPLLIVAGAGSGKTAVLTRRIAYLMAARGVGVGQILAITFTNKAAAEMRERVVGLVGEKARYMWVSTFHSTCVRILRNQAALIEGLNSNFSIYDADDSRRLLQMVGRDLGLDIKRYSPRLLANAISNLKNELIDPHQALAGLTEDSDDLARAVASVYDEYQRRLRAANALDFDDLIGETVAVLQAFPQIAQYYRRRFRHVLVDEYQDTNHAQYVLVRELVGRDSNDGIPPGELCVVGDADQSIYAFRGATIRNIEDFERDYPDTRTILLEQNYRSTQNILSAANSVIARNAGRREKRLWTDAGAGELIVGYVADNEHDEARFVAEEIDALAEGSEITYNDVAVFYRTNNSSRSLEEVLIRAGIPYKVVGGVRFYERKEIRDIVAYLRVLDNPGDAVSLRRILNTPRRGIGDRAEACVAVYAENTGVGFGDALVAAAQGKVPMLNTRAEKAIAGFVEMFDELRGRLDDDLGELVEAVLERTGYRRELEASTDPQELARLDNLNELVSVAHEFSTDRENAAALGPDDEDVPDTGVLADFLERVSLVADADEIPEHGAGVVTLMTLHTAKGLEFPVVFVTGWEDGMFPHMRALDNPTELSEERRLAYVGITRARQRLYVSRAIVRSSWGQPMLNPESRFLREIPQELIDWRRTAPKPSFSAPVSGAGRFGSARPSPTRSGASRRPLLVLQVGDRVTHDKYGLGRVEEVSGVGESAMSLIDFGSSGRVKLMHNHAPVTKL</sequence>
<accession>P9WMQ0</accession>
<accession>L0T870</accession>
<accession>P0A5A3</accession>
<accession>P71561</accession>
<feature type="chain" id="PRO_0000427265" description="ATP-dependent DNA helicase UvrD1">
    <location>
        <begin position="1"/>
        <end position="771"/>
    </location>
</feature>
<feature type="domain" description="UvrD-like helicase ATP-binding" evidence="2">
    <location>
        <begin position="21"/>
        <end position="311"/>
    </location>
</feature>
<feature type="domain" description="UvrD-like helicase C-terminal" evidence="3">
    <location>
        <begin position="312"/>
        <end position="603"/>
    </location>
</feature>
<feature type="region of interest" description="Disordered" evidence="4">
    <location>
        <begin position="1"/>
        <end position="21"/>
    </location>
</feature>
<feature type="region of interest" description="Disordered" evidence="4">
    <location>
        <begin position="691"/>
        <end position="716"/>
    </location>
</feature>
<feature type="binding site" evidence="2">
    <location>
        <begin position="45"/>
        <end position="50"/>
    </location>
    <ligand>
        <name>ATP</name>
        <dbReference type="ChEBI" id="CHEBI:30616"/>
    </ligand>
</feature>
<feature type="binding site" evidence="1">
    <location>
        <position position="309"/>
    </location>
    <ligand>
        <name>ATP</name>
        <dbReference type="ChEBI" id="CHEBI:30616"/>
    </ligand>
</feature>
<keyword id="KW-0067">ATP-binding</keyword>
<keyword id="KW-0227">DNA damage</keyword>
<keyword id="KW-0234">DNA repair</keyword>
<keyword id="KW-0238">DNA-binding</keyword>
<keyword id="KW-0347">Helicase</keyword>
<keyword id="KW-0378">Hydrolase</keyword>
<keyword id="KW-0413">Isomerase</keyword>
<keyword id="KW-0547">Nucleotide-binding</keyword>
<keyword id="KW-1185">Reference proteome</keyword>
<gene>
    <name type="primary">uvrD1</name>
    <name type="synonym">ivrd</name>
    <name type="synonym">pcrA</name>
    <name type="ordered locus">MT0976</name>
</gene>
<evidence type="ECO:0000250" key="1"/>
<evidence type="ECO:0000255" key="2">
    <source>
        <dbReference type="PROSITE-ProRule" id="PRU00560"/>
    </source>
</evidence>
<evidence type="ECO:0000255" key="3">
    <source>
        <dbReference type="PROSITE-ProRule" id="PRU00617"/>
    </source>
</evidence>
<evidence type="ECO:0000256" key="4">
    <source>
        <dbReference type="SAM" id="MobiDB-lite"/>
    </source>
</evidence>
<evidence type="ECO:0000305" key="5"/>
<organism>
    <name type="scientific">Mycobacterium tuberculosis (strain CDC 1551 / Oshkosh)</name>
    <dbReference type="NCBI Taxonomy" id="83331"/>
    <lineage>
        <taxon>Bacteria</taxon>
        <taxon>Bacillati</taxon>
        <taxon>Actinomycetota</taxon>
        <taxon>Actinomycetes</taxon>
        <taxon>Mycobacteriales</taxon>
        <taxon>Mycobacteriaceae</taxon>
        <taxon>Mycobacterium</taxon>
        <taxon>Mycobacterium tuberculosis complex</taxon>
    </lineage>
</organism>
<comment type="function">
    <text evidence="1">DNA-dependent ATPase, acting on dsDNA with a 3'-ssDNA tail, unwinding with 3'-to 5'-polarity. A minimal tail of 18 nt is required for activity. Also highly efficient on nicked DNA. Involved in the post-incision events of nucleotide excision repair, as well as in nitrosative and oxidative stress response and possibly in persistence in the host. Inhibits RecA-mediated DNA strand exchange; this does not require ATPase activity. When combined with UvrA greatly inhibits RecA-mediated DNA strand exchange (By similarity).</text>
</comment>
<comment type="catalytic activity">
    <reaction>
        <text>Couples ATP hydrolysis with the unwinding of duplex DNA by translocating in the 3'-5' direction.</text>
        <dbReference type="EC" id="5.6.2.4"/>
    </reaction>
</comment>
<comment type="catalytic activity">
    <reaction>
        <text>ATP + H2O = ADP + phosphate + H(+)</text>
        <dbReference type="Rhea" id="RHEA:13065"/>
        <dbReference type="ChEBI" id="CHEBI:15377"/>
        <dbReference type="ChEBI" id="CHEBI:15378"/>
        <dbReference type="ChEBI" id="CHEBI:30616"/>
        <dbReference type="ChEBI" id="CHEBI:43474"/>
        <dbReference type="ChEBI" id="CHEBI:456216"/>
        <dbReference type="EC" id="5.6.2.4"/>
    </reaction>
</comment>
<comment type="cofactor">
    <cofactor evidence="1">
        <name>Mg(2+)</name>
        <dbReference type="ChEBI" id="CHEBI:18420"/>
    </cofactor>
</comment>
<comment type="subunit">
    <text evidence="1">Monomer.</text>
</comment>
<comment type="similarity">
    <text evidence="5">Belongs to the helicase family. UvrD subfamily.</text>
</comment>
<protein>
    <recommendedName>
        <fullName>ATP-dependent DNA helicase UvrD1</fullName>
        <ecNumber>5.6.2.4</ecNumber>
    </recommendedName>
    <alternativeName>
        <fullName evidence="5">DNA 3'-5' helicase UvrD1</fullName>
    </alternativeName>
</protein>
<reference key="1">
    <citation type="journal article" date="2002" name="J. Bacteriol.">
        <title>Whole-genome comparison of Mycobacterium tuberculosis clinical and laboratory strains.</title>
        <authorList>
            <person name="Fleischmann R.D."/>
            <person name="Alland D."/>
            <person name="Eisen J.A."/>
            <person name="Carpenter L."/>
            <person name="White O."/>
            <person name="Peterson J.D."/>
            <person name="DeBoy R.T."/>
            <person name="Dodson R.J."/>
            <person name="Gwinn M.L."/>
            <person name="Haft D.H."/>
            <person name="Hickey E.K."/>
            <person name="Kolonay J.F."/>
            <person name="Nelson W.C."/>
            <person name="Umayam L.A."/>
            <person name="Ermolaeva M.D."/>
            <person name="Salzberg S.L."/>
            <person name="Delcher A."/>
            <person name="Utterback T.R."/>
            <person name="Weidman J.F."/>
            <person name="Khouri H.M."/>
            <person name="Gill J."/>
            <person name="Mikula A."/>
            <person name="Bishai W."/>
            <person name="Jacobs W.R. Jr."/>
            <person name="Venter J.C."/>
            <person name="Fraser C.M."/>
        </authorList>
    </citation>
    <scope>NUCLEOTIDE SEQUENCE [LARGE SCALE GENOMIC DNA]</scope>
    <source>
        <strain>CDC 1551 / Oshkosh</strain>
    </source>
</reference>